<protein>
    <recommendedName>
        <fullName evidence="1">Formate channel FocA</fullName>
    </recommendedName>
    <alternativeName>
        <fullName evidence="1">Formate transporter FocA</fullName>
    </alternativeName>
</protein>
<feature type="chain" id="PRO_0000094719" description="Formate channel FocA">
    <location>
        <begin position="1"/>
        <end position="285"/>
    </location>
</feature>
<feature type="topological domain" description="Cytoplasmic" evidence="2">
    <location>
        <begin position="1"/>
        <end position="30"/>
    </location>
</feature>
<feature type="transmembrane region" description="Helical" evidence="2">
    <location>
        <begin position="31"/>
        <end position="56"/>
    </location>
</feature>
<feature type="topological domain" description="Periplasmic" evidence="2">
    <location>
        <begin position="57"/>
        <end position="64"/>
    </location>
</feature>
<feature type="transmembrane region" description="Helical" evidence="2">
    <location>
        <begin position="65"/>
        <end position="85"/>
    </location>
</feature>
<feature type="topological domain" description="Cytoplasmic" evidence="2">
    <location>
        <begin position="86"/>
        <end position="112"/>
    </location>
</feature>
<feature type="transmembrane region" description="Helical" evidence="2">
    <location>
        <begin position="113"/>
        <end position="135"/>
    </location>
</feature>
<feature type="topological domain" description="Periplasmic" evidence="2">
    <location>
        <begin position="136"/>
        <end position="160"/>
    </location>
</feature>
<feature type="transmembrane region" description="Helical" evidence="2">
    <location>
        <begin position="161"/>
        <end position="181"/>
    </location>
</feature>
<feature type="topological domain" description="Cytoplasmic" evidence="2">
    <location>
        <begin position="182"/>
        <end position="187"/>
    </location>
</feature>
<feature type="transmembrane region" description="Helical" evidence="2">
    <location>
        <begin position="188"/>
        <end position="205"/>
    </location>
</feature>
<feature type="topological domain" description="Periplasmic" evidence="2">
    <location>
        <begin position="206"/>
        <end position="249"/>
    </location>
</feature>
<feature type="transmembrane region" description="Helical" evidence="2">
    <location>
        <begin position="250"/>
        <end position="276"/>
    </location>
</feature>
<feature type="topological domain" description="Cytoplasmic" evidence="2">
    <location>
        <begin position="277"/>
        <end position="285"/>
    </location>
</feature>
<feature type="site" description="Important for formate translocation" evidence="1">
    <location>
        <position position="91"/>
    </location>
</feature>
<feature type="site" description="Important for formate translocation" evidence="1">
    <location>
        <position position="209"/>
    </location>
</feature>
<gene>
    <name type="primary">focA</name>
    <name type="synonym">focA_2</name>
    <name type="ordered locus">c1042</name>
</gene>
<comment type="function">
    <text evidence="1">Involved in the bidirectional transport of formate during mixed-acid fermentation. Functions to maintain relatively constant intracellular formate levels during growth, using different mechanisms for efflux and uptake of the anion.</text>
</comment>
<comment type="catalytic activity">
    <reaction evidence="1">
        <text>formate(in) = formate(out)</text>
        <dbReference type="Rhea" id="RHEA:29679"/>
        <dbReference type="ChEBI" id="CHEBI:15740"/>
    </reaction>
</comment>
<comment type="subunit">
    <text evidence="2">Homopentamer.</text>
</comment>
<comment type="subcellular location">
    <subcellularLocation>
        <location evidence="2">Cell inner membrane</location>
        <topology evidence="2">Multi-pass membrane protein</topology>
    </subcellularLocation>
</comment>
<comment type="similarity">
    <text evidence="3">Belongs to the FNT transporter (TC 1.A.16) family.</text>
</comment>
<comment type="sequence caution" evidence="3">
    <conflict type="erroneous initiation">
        <sequence resource="EMBL-CDS" id="AAN79512"/>
    </conflict>
</comment>
<keyword id="KW-0997">Cell inner membrane</keyword>
<keyword id="KW-1003">Cell membrane</keyword>
<keyword id="KW-0472">Membrane</keyword>
<keyword id="KW-1185">Reference proteome</keyword>
<keyword id="KW-0812">Transmembrane</keyword>
<keyword id="KW-1133">Transmembrane helix</keyword>
<keyword id="KW-0813">Transport</keyword>
<organism>
    <name type="scientific">Escherichia coli O6:H1 (strain CFT073 / ATCC 700928 / UPEC)</name>
    <dbReference type="NCBI Taxonomy" id="199310"/>
    <lineage>
        <taxon>Bacteria</taxon>
        <taxon>Pseudomonadati</taxon>
        <taxon>Pseudomonadota</taxon>
        <taxon>Gammaproteobacteria</taxon>
        <taxon>Enterobacterales</taxon>
        <taxon>Enterobacteriaceae</taxon>
        <taxon>Escherichia</taxon>
    </lineage>
</organism>
<name>FOCA_ECOL6</name>
<proteinExistence type="inferred from homology"/>
<sequence>MKADNPFDLLLPAAMAKVAEEAGVYKATKHPLKTFYLAITAGVFISIAFVFYITATTGTGTMPFGMAKLVGGICFSLGLILCVVCGADLFTSTVLIVVAKASGRITWGQLAKNWLNVYFGNLVGALLFVLLMWLSGEYMTANGQWGLNVLQTADHKVHHTFIEAVCLGILANLMVCLAVWMSYSGRSLMDKAFIMVLPVAMFVASGFEHSIANMFMIPMGIVIRDFASPEFWTAVGSAPENFSHLTVMNFITDNLIPVTIGNIIGGGLLVGLTYWVIYLRENDHH</sequence>
<dbReference type="EMBL" id="AE014075">
    <property type="protein sequence ID" value="AAN79512.1"/>
    <property type="status" value="ALT_INIT"/>
    <property type="molecule type" value="Genomic_DNA"/>
</dbReference>
<dbReference type="RefSeq" id="WP_000642546.1">
    <property type="nucleotide sequence ID" value="NZ_CP051263.1"/>
</dbReference>
<dbReference type="SMR" id="P0AC24"/>
<dbReference type="STRING" id="199310.c1042"/>
<dbReference type="GeneID" id="93776514"/>
<dbReference type="KEGG" id="ecc:c1042"/>
<dbReference type="eggNOG" id="COG2116">
    <property type="taxonomic scope" value="Bacteria"/>
</dbReference>
<dbReference type="HOGENOM" id="CLU_036896_3_0_6"/>
<dbReference type="Proteomes" id="UP000001410">
    <property type="component" value="Chromosome"/>
</dbReference>
<dbReference type="GO" id="GO:0005886">
    <property type="term" value="C:plasma membrane"/>
    <property type="evidence" value="ECO:0007669"/>
    <property type="project" value="UniProtKB-SubCell"/>
</dbReference>
<dbReference type="GO" id="GO:0015499">
    <property type="term" value="F:formate transmembrane transporter activity"/>
    <property type="evidence" value="ECO:0007669"/>
    <property type="project" value="InterPro"/>
</dbReference>
<dbReference type="FunFam" id="1.20.1080.10:FF:000006">
    <property type="entry name" value="Formate transporter FocA"/>
    <property type="match status" value="1"/>
</dbReference>
<dbReference type="Gene3D" id="1.20.1080.10">
    <property type="entry name" value="Glycerol uptake facilitator protein"/>
    <property type="match status" value="1"/>
</dbReference>
<dbReference type="InterPro" id="IPR023271">
    <property type="entry name" value="Aquaporin-like"/>
</dbReference>
<dbReference type="InterPro" id="IPR000292">
    <property type="entry name" value="For/NO2_transpt"/>
</dbReference>
<dbReference type="InterPro" id="IPR024002">
    <property type="entry name" value="For/NO2_transpt_CS"/>
</dbReference>
<dbReference type="InterPro" id="IPR023999">
    <property type="entry name" value="Formate_transptr_FocA"/>
</dbReference>
<dbReference type="NCBIfam" id="TIGR00790">
    <property type="entry name" value="fnt"/>
    <property type="match status" value="1"/>
</dbReference>
<dbReference type="NCBIfam" id="TIGR04060">
    <property type="entry name" value="formate_focA"/>
    <property type="match status" value="1"/>
</dbReference>
<dbReference type="NCBIfam" id="NF008069">
    <property type="entry name" value="PRK10805.1"/>
    <property type="match status" value="1"/>
</dbReference>
<dbReference type="PANTHER" id="PTHR30520:SF10">
    <property type="entry name" value="FORMATE CHANNEL FOCA-RELATED"/>
    <property type="match status" value="1"/>
</dbReference>
<dbReference type="PANTHER" id="PTHR30520">
    <property type="entry name" value="FORMATE TRANSPORTER-RELATED"/>
    <property type="match status" value="1"/>
</dbReference>
<dbReference type="Pfam" id="PF01226">
    <property type="entry name" value="Form_Nir_trans"/>
    <property type="match status" value="1"/>
</dbReference>
<dbReference type="PROSITE" id="PS01005">
    <property type="entry name" value="FORMATE_NITRITE_TP_1"/>
    <property type="match status" value="1"/>
</dbReference>
<dbReference type="PROSITE" id="PS01006">
    <property type="entry name" value="FORMATE_NITRITE_TP_2"/>
    <property type="match status" value="1"/>
</dbReference>
<reference key="1">
    <citation type="journal article" date="2002" name="Proc. Natl. Acad. Sci. U.S.A.">
        <title>Extensive mosaic structure revealed by the complete genome sequence of uropathogenic Escherichia coli.</title>
        <authorList>
            <person name="Welch R.A."/>
            <person name="Burland V."/>
            <person name="Plunkett G. III"/>
            <person name="Redford P."/>
            <person name="Roesch P."/>
            <person name="Rasko D."/>
            <person name="Buckles E.L."/>
            <person name="Liou S.-R."/>
            <person name="Boutin A."/>
            <person name="Hackett J."/>
            <person name="Stroud D."/>
            <person name="Mayhew G.F."/>
            <person name="Rose D.J."/>
            <person name="Zhou S."/>
            <person name="Schwartz D.C."/>
            <person name="Perna N.T."/>
            <person name="Mobley H.L.T."/>
            <person name="Donnenberg M.S."/>
            <person name="Blattner F.R."/>
        </authorList>
    </citation>
    <scope>NUCLEOTIDE SEQUENCE [LARGE SCALE GENOMIC DNA]</scope>
    <source>
        <strain>CFT073 / ATCC 700928 / UPEC</strain>
    </source>
</reference>
<accession>P0AC24</accession>
<accession>P21501</accession>
<evidence type="ECO:0000250" key="1">
    <source>
        <dbReference type="UniProtKB" id="P0AC23"/>
    </source>
</evidence>
<evidence type="ECO:0000250" key="2">
    <source>
        <dbReference type="UniProtKB" id="P0AC25"/>
    </source>
</evidence>
<evidence type="ECO:0000305" key="3"/>